<comment type="function">
    <text evidence="2">Catalyzes the cleavage of citrate into oxaloacetate and acetyl-CoA, the latter serving as common substrate in multiple biochemical reactions in protein, carbohydrate and lipid metabolism.</text>
</comment>
<comment type="catalytic activity">
    <reaction evidence="2">
        <text>oxaloacetate + acetyl-CoA + ADP + phosphate = citrate + ATP + CoA</text>
        <dbReference type="Rhea" id="RHEA:21160"/>
        <dbReference type="ChEBI" id="CHEBI:16452"/>
        <dbReference type="ChEBI" id="CHEBI:16947"/>
        <dbReference type="ChEBI" id="CHEBI:30616"/>
        <dbReference type="ChEBI" id="CHEBI:43474"/>
        <dbReference type="ChEBI" id="CHEBI:57287"/>
        <dbReference type="ChEBI" id="CHEBI:57288"/>
        <dbReference type="ChEBI" id="CHEBI:456216"/>
        <dbReference type="EC" id="2.3.3.8"/>
    </reaction>
</comment>
<comment type="subunit">
    <text evidence="2">Homotetramer.</text>
</comment>
<comment type="subcellular location">
    <subcellularLocation>
        <location evidence="2">Cytoplasm</location>
    </subcellularLocation>
</comment>
<comment type="similarity">
    <text evidence="6">In the N-terminal section; belongs to the succinate/malate CoA ligase beta subunit family.</text>
</comment>
<comment type="similarity">
    <text evidence="6">In the C-terminal section; belongs to the succinate/malate CoA ligase alpha subunit family.</text>
</comment>
<keyword id="KW-0067">ATP-binding</keyword>
<keyword id="KW-0963">Cytoplasm</keyword>
<keyword id="KW-0444">Lipid biosynthesis</keyword>
<keyword id="KW-0443">Lipid metabolism</keyword>
<keyword id="KW-0460">Magnesium</keyword>
<keyword id="KW-0479">Metal-binding</keyword>
<keyword id="KW-0547">Nucleotide-binding</keyword>
<keyword id="KW-0597">Phosphoprotein</keyword>
<keyword id="KW-1185">Reference proteome</keyword>
<keyword id="KW-0808">Transferase</keyword>
<name>ACLY_CAEEL</name>
<accession>P53585</accession>
<evidence type="ECO:0000250" key="1">
    <source>
        <dbReference type="UniProtKB" id="P16638"/>
    </source>
</evidence>
<evidence type="ECO:0000250" key="2">
    <source>
        <dbReference type="UniProtKB" id="P53396"/>
    </source>
</evidence>
<evidence type="ECO:0000250" key="3">
    <source>
        <dbReference type="UniProtKB" id="Q84LB6"/>
    </source>
</evidence>
<evidence type="ECO:0000255" key="4"/>
<evidence type="ECO:0000256" key="5">
    <source>
        <dbReference type="SAM" id="MobiDB-lite"/>
    </source>
</evidence>
<evidence type="ECO:0000305" key="6"/>
<evidence type="ECO:0000312" key="7">
    <source>
        <dbReference type="WormBase" id="D1005.1"/>
    </source>
</evidence>
<reference key="1">
    <citation type="journal article" date="1998" name="Science">
        <title>Genome sequence of the nematode C. elegans: a platform for investigating biology.</title>
        <authorList>
            <consortium name="The C. elegans sequencing consortium"/>
        </authorList>
    </citation>
    <scope>NUCLEOTIDE SEQUENCE [LARGE SCALE GENOMIC DNA]</scope>
    <source>
        <strain>Bristol N2</strain>
    </source>
</reference>
<organism>
    <name type="scientific">Caenorhabditis elegans</name>
    <dbReference type="NCBI Taxonomy" id="6239"/>
    <lineage>
        <taxon>Eukaryota</taxon>
        <taxon>Metazoa</taxon>
        <taxon>Ecdysozoa</taxon>
        <taxon>Nematoda</taxon>
        <taxon>Chromadorea</taxon>
        <taxon>Rhabditida</taxon>
        <taxon>Rhabditina</taxon>
        <taxon>Rhabditomorpha</taxon>
        <taxon>Rhabditoidea</taxon>
        <taxon>Rhabditidae</taxon>
        <taxon>Peloderinae</taxon>
        <taxon>Caenorhabditis</taxon>
    </lineage>
</organism>
<feature type="chain" id="PRO_0000102784" description="Probable ATP-citrate synthase" evidence="6">
    <location>
        <begin position="1"/>
        <end position="1106"/>
    </location>
</feature>
<feature type="region of interest" description="Disordered" evidence="5">
    <location>
        <begin position="442"/>
        <end position="478"/>
    </location>
</feature>
<feature type="compositionally biased region" description="Polar residues" evidence="5">
    <location>
        <begin position="442"/>
        <end position="459"/>
    </location>
</feature>
<feature type="active site" description="Tele-phosphohistidine intermediate" evidence="1">
    <location>
        <position position="760"/>
    </location>
</feature>
<feature type="binding site" evidence="2">
    <location>
        <position position="358"/>
    </location>
    <ligand>
        <name>citrate</name>
        <dbReference type="ChEBI" id="CHEBI:16947"/>
    </ligand>
</feature>
<feature type="binding site" evidence="2">
    <location>
        <position position="360"/>
    </location>
    <ligand>
        <name>citrate</name>
        <dbReference type="ChEBI" id="CHEBI:16947"/>
    </ligand>
</feature>
<feature type="binding site" evidence="2">
    <location>
        <position position="391"/>
    </location>
    <ligand>
        <name>citrate</name>
        <dbReference type="ChEBI" id="CHEBI:16947"/>
    </ligand>
</feature>
<feature type="binding site" evidence="6">
    <location>
        <begin position="701"/>
        <end position="721"/>
    </location>
    <ligand>
        <name>ATP</name>
        <dbReference type="ChEBI" id="CHEBI:30616"/>
    </ligand>
</feature>
<feature type="binding site" evidence="3">
    <location>
        <position position="718"/>
    </location>
    <ligand>
        <name>Mg(2+)</name>
        <dbReference type="ChEBI" id="CHEBI:18420"/>
    </ligand>
</feature>
<feature type="binding site" evidence="6">
    <location>
        <begin position="752"/>
        <end position="778"/>
    </location>
    <ligand>
        <name>ATP</name>
        <dbReference type="ChEBI" id="CHEBI:30616"/>
    </ligand>
</feature>
<feature type="binding site" evidence="4">
    <location>
        <begin position="779"/>
        <end position="789"/>
    </location>
    <ligand>
        <name>CoA</name>
        <dbReference type="ChEBI" id="CHEBI:57287"/>
    </ligand>
</feature>
<protein>
    <recommendedName>
        <fullName evidence="2">Probable ATP-citrate synthase</fullName>
        <ecNumber evidence="2">2.3.3.8</ecNumber>
    </recommendedName>
    <alternativeName>
        <fullName evidence="2">ATP-citrate (pro-S-)-lyase</fullName>
    </alternativeName>
    <alternativeName>
        <fullName evidence="2">Citrate cleavage enzyme</fullName>
    </alternativeName>
</protein>
<dbReference type="EC" id="2.3.3.8" evidence="2"/>
<dbReference type="EMBL" id="FO080989">
    <property type="protein sequence ID" value="CCD68276.1"/>
    <property type="molecule type" value="Genomic_DNA"/>
</dbReference>
<dbReference type="PIR" id="T29496">
    <property type="entry name" value="T29496"/>
</dbReference>
<dbReference type="RefSeq" id="NP_508280.1">
    <property type="nucleotide sequence ID" value="NM_075879.6"/>
</dbReference>
<dbReference type="SMR" id="P53585"/>
<dbReference type="BioGRID" id="45435">
    <property type="interactions" value="17"/>
</dbReference>
<dbReference type="DIP" id="DIP-26861N"/>
<dbReference type="FunCoup" id="P53585">
    <property type="interactions" value="2911"/>
</dbReference>
<dbReference type="IntAct" id="P53585">
    <property type="interactions" value="5"/>
</dbReference>
<dbReference type="STRING" id="6239.D1005.1.1"/>
<dbReference type="iPTMnet" id="P53585"/>
<dbReference type="PaxDb" id="6239-D1005.1"/>
<dbReference type="PeptideAtlas" id="P53585"/>
<dbReference type="EnsemblMetazoa" id="D1005.1.1">
    <property type="protein sequence ID" value="D1005.1.1"/>
    <property type="gene ID" value="WBGene00016995"/>
</dbReference>
<dbReference type="GeneID" id="180485"/>
<dbReference type="KEGG" id="cel:CELE_D1005.1"/>
<dbReference type="UCSC" id="D1005.1">
    <property type="organism name" value="c. elegans"/>
</dbReference>
<dbReference type="AGR" id="WB:WBGene00016995"/>
<dbReference type="CTD" id="180485"/>
<dbReference type="WormBase" id="D1005.1">
    <property type="protein sequence ID" value="CE06997"/>
    <property type="gene ID" value="WBGene00016995"/>
    <property type="gene designation" value="acly-1"/>
</dbReference>
<dbReference type="eggNOG" id="KOG1254">
    <property type="taxonomic scope" value="Eukaryota"/>
</dbReference>
<dbReference type="GeneTree" id="ENSGT00940000154881"/>
<dbReference type="HOGENOM" id="CLU_006587_0_1_1"/>
<dbReference type="InParanoid" id="P53585"/>
<dbReference type="OMA" id="MDYAWAK"/>
<dbReference type="OrthoDB" id="3261737at2759"/>
<dbReference type="PhylomeDB" id="P53585"/>
<dbReference type="Reactome" id="R-CEL-6798695">
    <property type="pathway name" value="Neutrophil degranulation"/>
</dbReference>
<dbReference type="Reactome" id="R-CEL-75105">
    <property type="pathway name" value="Fatty acyl-CoA biosynthesis"/>
</dbReference>
<dbReference type="PRO" id="PR:P53585"/>
<dbReference type="Proteomes" id="UP000001940">
    <property type="component" value="Chromosome X"/>
</dbReference>
<dbReference type="Bgee" id="WBGene00016995">
    <property type="expression patterns" value="Expressed in material anatomical entity and 5 other cell types or tissues"/>
</dbReference>
<dbReference type="GO" id="GO:0005829">
    <property type="term" value="C:cytosol"/>
    <property type="evidence" value="ECO:0000318"/>
    <property type="project" value="GO_Central"/>
</dbReference>
<dbReference type="GO" id="GO:0005524">
    <property type="term" value="F:ATP binding"/>
    <property type="evidence" value="ECO:0007669"/>
    <property type="project" value="UniProtKB-KW"/>
</dbReference>
<dbReference type="GO" id="GO:0003878">
    <property type="term" value="F:ATP citrate synthase activity"/>
    <property type="evidence" value="ECO:0000318"/>
    <property type="project" value="GO_Central"/>
</dbReference>
<dbReference type="GO" id="GO:0046872">
    <property type="term" value="F:metal ion binding"/>
    <property type="evidence" value="ECO:0007669"/>
    <property type="project" value="UniProtKB-KW"/>
</dbReference>
<dbReference type="GO" id="GO:0006085">
    <property type="term" value="P:acetyl-CoA biosynthetic process"/>
    <property type="evidence" value="ECO:0000318"/>
    <property type="project" value="GO_Central"/>
</dbReference>
<dbReference type="GO" id="GO:0006101">
    <property type="term" value="P:citrate metabolic process"/>
    <property type="evidence" value="ECO:0007669"/>
    <property type="project" value="InterPro"/>
</dbReference>
<dbReference type="GO" id="GO:0006633">
    <property type="term" value="P:fatty acid biosynthetic process"/>
    <property type="evidence" value="ECO:0000318"/>
    <property type="project" value="GO_Central"/>
</dbReference>
<dbReference type="CDD" id="cd06100">
    <property type="entry name" value="CCL_ACL-C"/>
    <property type="match status" value="1"/>
</dbReference>
<dbReference type="FunFam" id="1.10.230.10:FF:000010">
    <property type="entry name" value="ATP-citrate synthase"/>
    <property type="match status" value="1"/>
</dbReference>
<dbReference type="FunFam" id="1.10.580.10:FF:000009">
    <property type="entry name" value="ATP-citrate synthase"/>
    <property type="match status" value="1"/>
</dbReference>
<dbReference type="FunFam" id="3.30.470.110:FF:000004">
    <property type="entry name" value="ATP-citrate synthase"/>
    <property type="match status" value="1"/>
</dbReference>
<dbReference type="FunFam" id="3.40.50.261:FF:000003">
    <property type="entry name" value="ATP-citrate synthase subunit"/>
    <property type="match status" value="1"/>
</dbReference>
<dbReference type="FunFam" id="3.40.50.261:FF:000004">
    <property type="entry name" value="ATP-citrate synthase subunit"/>
    <property type="match status" value="1"/>
</dbReference>
<dbReference type="FunFam" id="3.40.50.720:FF:000024">
    <property type="entry name" value="Probable ATP-citrate synthase"/>
    <property type="match status" value="1"/>
</dbReference>
<dbReference type="Gene3D" id="3.30.470.110">
    <property type="match status" value="1"/>
</dbReference>
<dbReference type="Gene3D" id="1.10.580.10">
    <property type="entry name" value="Citrate Synthase, domain 1"/>
    <property type="match status" value="1"/>
</dbReference>
<dbReference type="Gene3D" id="1.10.230.10">
    <property type="entry name" value="Cytochrome P450-Terp, domain 2"/>
    <property type="match status" value="1"/>
</dbReference>
<dbReference type="Gene3D" id="3.40.50.720">
    <property type="entry name" value="NAD(P)-binding Rossmann-like Domain"/>
    <property type="match status" value="1"/>
</dbReference>
<dbReference type="Gene3D" id="3.40.50.261">
    <property type="entry name" value="Succinyl-CoA synthetase domains"/>
    <property type="match status" value="2"/>
</dbReference>
<dbReference type="InterPro" id="IPR014608">
    <property type="entry name" value="ATP-citrate_synthase"/>
</dbReference>
<dbReference type="InterPro" id="IPR017440">
    <property type="entry name" value="Cit_synth/succinyl-CoA_lig_AS"/>
</dbReference>
<dbReference type="InterPro" id="IPR032263">
    <property type="entry name" value="Citrate-bd"/>
</dbReference>
<dbReference type="InterPro" id="IPR016142">
    <property type="entry name" value="Citrate_synth-like_lrg_a-sub"/>
</dbReference>
<dbReference type="InterPro" id="IPR016143">
    <property type="entry name" value="Citrate_synth-like_sm_a-sub"/>
</dbReference>
<dbReference type="InterPro" id="IPR056749">
    <property type="entry name" value="Citrate_synth_N"/>
</dbReference>
<dbReference type="InterPro" id="IPR002020">
    <property type="entry name" value="Citrate_synthase"/>
</dbReference>
<dbReference type="InterPro" id="IPR036969">
    <property type="entry name" value="Citrate_synthase_sf"/>
</dbReference>
<dbReference type="InterPro" id="IPR033847">
    <property type="entry name" value="Citrt_syn/SCS-alpha_CS"/>
</dbReference>
<dbReference type="InterPro" id="IPR003781">
    <property type="entry name" value="CoA-bd"/>
</dbReference>
<dbReference type="InterPro" id="IPR036291">
    <property type="entry name" value="NAD(P)-bd_dom_sf"/>
</dbReference>
<dbReference type="InterPro" id="IPR017866">
    <property type="entry name" value="Succ-CoA_synthase_bsu_CS"/>
</dbReference>
<dbReference type="InterPro" id="IPR005811">
    <property type="entry name" value="SUCC_ACL_C"/>
</dbReference>
<dbReference type="InterPro" id="IPR016102">
    <property type="entry name" value="Succinyl-CoA_synth-like"/>
</dbReference>
<dbReference type="PANTHER" id="PTHR23118">
    <property type="entry name" value="ATP-CITRATE SYNTHASE"/>
    <property type="match status" value="1"/>
</dbReference>
<dbReference type="PANTHER" id="PTHR23118:SF59">
    <property type="entry name" value="ATP-CITRATE SYNTHASE-RELATED"/>
    <property type="match status" value="1"/>
</dbReference>
<dbReference type="Pfam" id="PF16114">
    <property type="entry name" value="Citrate_bind"/>
    <property type="match status" value="1"/>
</dbReference>
<dbReference type="Pfam" id="PF00285">
    <property type="entry name" value="Citrate_synt"/>
    <property type="match status" value="1"/>
</dbReference>
<dbReference type="Pfam" id="PF24948">
    <property type="entry name" value="Citrate_synth_N"/>
    <property type="match status" value="1"/>
</dbReference>
<dbReference type="Pfam" id="PF02629">
    <property type="entry name" value="CoA_binding"/>
    <property type="match status" value="1"/>
</dbReference>
<dbReference type="Pfam" id="PF00549">
    <property type="entry name" value="Ligase_CoA"/>
    <property type="match status" value="1"/>
</dbReference>
<dbReference type="PIRSF" id="PIRSF036511">
    <property type="entry name" value="ATP_citrt_syn"/>
    <property type="match status" value="1"/>
</dbReference>
<dbReference type="SUPFAM" id="SSF48256">
    <property type="entry name" value="Citrate synthase"/>
    <property type="match status" value="1"/>
</dbReference>
<dbReference type="SUPFAM" id="SSF56059">
    <property type="entry name" value="Glutathione synthetase ATP-binding domain-like"/>
    <property type="match status" value="1"/>
</dbReference>
<dbReference type="SUPFAM" id="SSF51735">
    <property type="entry name" value="NAD(P)-binding Rossmann-fold domains"/>
    <property type="match status" value="1"/>
</dbReference>
<dbReference type="SUPFAM" id="SSF52210">
    <property type="entry name" value="Succinyl-CoA synthetase domains"/>
    <property type="match status" value="1"/>
</dbReference>
<dbReference type="PROSITE" id="PS01216">
    <property type="entry name" value="SUCCINYL_COA_LIG_1"/>
    <property type="match status" value="1"/>
</dbReference>
<dbReference type="PROSITE" id="PS00399">
    <property type="entry name" value="SUCCINYL_COA_LIG_2"/>
    <property type="match status" value="1"/>
</dbReference>
<dbReference type="PROSITE" id="PS01217">
    <property type="entry name" value="SUCCINYL_COA_LIG_3"/>
    <property type="match status" value="1"/>
</dbReference>
<gene>
    <name evidence="7" type="primary">acly-1</name>
    <name evidence="7" type="ORF">D1005.1</name>
</gene>
<sequence>MSAKAVSELSGKEVLYKYFEPSGLLSAPHAFHVKAGENFDEIANKYEWLARDNKGVIKPDQLIKRRGKLGLVKIGTPQELKAWFEKTGDSYVRVGQTEGRLHTFIVEPFCAHTEKDEMYIAIYSERFRDVIMFYEQGGVDIGDVEEKARTVSVPVQLNENAMTPSDEELTTLLGPLKDSDIVRRFVVELYKAYKDLHFTYLEINPFVLLNNQIHVLDLAARLDETANFLCADKWKSRLTPYGGPNHVEFPAPFGRDLTSEEQYISEMDAKTGASLKLTILNRKGRVWTMVAGGGASVVFTDTVCDLGGASELANYGEYSGDPSESQTYEYAKTLLSVMTEGTPRPDGKVLIIGGSIANFTNVAKTFGGIVRAFETFVSKLKEHKVTIFVRRGGPNYQEGLRRIKDAATKLELPIHVFGPETHMTAIVGAALGVKPMPTVPTAPQTTGQFLLSPERNTGGTERAPPSPAANATPTEHPLTTAQQNKLKSFRGLFEDDTKAIIWGQQAKAIQGMLDFDYVCRRSSPSVVASTYPFTGDNKQKYYFGQKEILIPAYKSMAKAFATHPDASIMVTFASMRSVFETVLEALEFPQIKVIAIIAEGVPENQTRKLLKIAHDRGVTLVGPATVGGIKPGCFKIGNTGGMMDNILASKLYRPGSVAYVSRSGGMSNELNNIISQNTNGVYEGIAIGGDRYPGSTYTDHVIRYQNDDRVKMIVLLGEVGGVEEYKIVDLLKQKKVTKPLVAWCIGTCADHITSEVQFGHAGASANALGETAACKNAALRASGALVPESFDDLGNKIRQTYDELVSQQIIVPQPEVPPPAVPMDYAWARELGLIRKPASFMTSICDERGEELNYAGVPITKVLESDMGIGGVLGLLWFQKRLPPHANKFIEICLMLTADHGPAVSGAHNTIVCARAGKDLISSLTSGLLTIGDRFGGALDGAARQFSEAFDQGWSANQFVSEMRKKGKHIMGIGHRVKSINNPDKRVEILKRFAMDKKEFAQETPLFEYALEVEKITTAKKPNLILNVDGAIAILFVDILRHSGMFTKQEAEETIEIGSLNGLFVLGRSIGFIGHYLDQSRLKQGLYRHPWDDISYIMPESNLVKF</sequence>
<proteinExistence type="inferred from homology"/>